<sequence length="105" mass="11168">MAKIKKGDQVIVIAGKEKGKQGTVLSVSEDRVKVEGLNLVKKHQKPNRVTGAEGGIVTQEASLHISNVAILNATTQKADRVGYQVIDGVKTRVYKSTGESVAVAK</sequence>
<dbReference type="EMBL" id="CU459141">
    <property type="protein sequence ID" value="CAM85393.1"/>
    <property type="molecule type" value="Genomic_DNA"/>
</dbReference>
<dbReference type="RefSeq" id="WP_001062685.1">
    <property type="nucleotide sequence ID" value="NZ_JBDGFB010000011.1"/>
</dbReference>
<dbReference type="SMR" id="B0V6V6"/>
<dbReference type="EnsemblBacteria" id="CAM85393">
    <property type="protein sequence ID" value="CAM85393"/>
    <property type="gene ID" value="ABAYE0419"/>
</dbReference>
<dbReference type="GeneID" id="92895306"/>
<dbReference type="KEGG" id="aby:ABAYE0419"/>
<dbReference type="HOGENOM" id="CLU_093315_2_2_6"/>
<dbReference type="GO" id="GO:1990904">
    <property type="term" value="C:ribonucleoprotein complex"/>
    <property type="evidence" value="ECO:0007669"/>
    <property type="project" value="UniProtKB-KW"/>
</dbReference>
<dbReference type="GO" id="GO:0005840">
    <property type="term" value="C:ribosome"/>
    <property type="evidence" value="ECO:0007669"/>
    <property type="project" value="UniProtKB-KW"/>
</dbReference>
<dbReference type="GO" id="GO:0019843">
    <property type="term" value="F:rRNA binding"/>
    <property type="evidence" value="ECO:0007669"/>
    <property type="project" value="UniProtKB-UniRule"/>
</dbReference>
<dbReference type="GO" id="GO:0003735">
    <property type="term" value="F:structural constituent of ribosome"/>
    <property type="evidence" value="ECO:0007669"/>
    <property type="project" value="InterPro"/>
</dbReference>
<dbReference type="GO" id="GO:0006412">
    <property type="term" value="P:translation"/>
    <property type="evidence" value="ECO:0007669"/>
    <property type="project" value="UniProtKB-UniRule"/>
</dbReference>
<dbReference type="CDD" id="cd06089">
    <property type="entry name" value="KOW_RPL26"/>
    <property type="match status" value="1"/>
</dbReference>
<dbReference type="FunFam" id="2.30.30.30:FF:000004">
    <property type="entry name" value="50S ribosomal protein L24"/>
    <property type="match status" value="1"/>
</dbReference>
<dbReference type="Gene3D" id="2.30.30.30">
    <property type="match status" value="1"/>
</dbReference>
<dbReference type="HAMAP" id="MF_01326_B">
    <property type="entry name" value="Ribosomal_uL24_B"/>
    <property type="match status" value="1"/>
</dbReference>
<dbReference type="InterPro" id="IPR005824">
    <property type="entry name" value="KOW"/>
</dbReference>
<dbReference type="InterPro" id="IPR014722">
    <property type="entry name" value="Rib_uL2_dom2"/>
</dbReference>
<dbReference type="InterPro" id="IPR003256">
    <property type="entry name" value="Ribosomal_uL24"/>
</dbReference>
<dbReference type="InterPro" id="IPR005825">
    <property type="entry name" value="Ribosomal_uL24_CS"/>
</dbReference>
<dbReference type="InterPro" id="IPR041988">
    <property type="entry name" value="Ribosomal_uL24_KOW"/>
</dbReference>
<dbReference type="InterPro" id="IPR008991">
    <property type="entry name" value="Translation_prot_SH3-like_sf"/>
</dbReference>
<dbReference type="NCBIfam" id="TIGR01079">
    <property type="entry name" value="rplX_bact"/>
    <property type="match status" value="1"/>
</dbReference>
<dbReference type="PANTHER" id="PTHR12903">
    <property type="entry name" value="MITOCHONDRIAL RIBOSOMAL PROTEIN L24"/>
    <property type="match status" value="1"/>
</dbReference>
<dbReference type="Pfam" id="PF00467">
    <property type="entry name" value="KOW"/>
    <property type="match status" value="1"/>
</dbReference>
<dbReference type="Pfam" id="PF17136">
    <property type="entry name" value="ribosomal_L24"/>
    <property type="match status" value="1"/>
</dbReference>
<dbReference type="SMART" id="SM00739">
    <property type="entry name" value="KOW"/>
    <property type="match status" value="1"/>
</dbReference>
<dbReference type="SUPFAM" id="SSF50104">
    <property type="entry name" value="Translation proteins SH3-like domain"/>
    <property type="match status" value="1"/>
</dbReference>
<dbReference type="PROSITE" id="PS01108">
    <property type="entry name" value="RIBOSOMAL_L24"/>
    <property type="match status" value="1"/>
</dbReference>
<evidence type="ECO:0000255" key="1">
    <source>
        <dbReference type="HAMAP-Rule" id="MF_01326"/>
    </source>
</evidence>
<evidence type="ECO:0000305" key="2"/>
<feature type="chain" id="PRO_1000141952" description="Large ribosomal subunit protein uL24">
    <location>
        <begin position="1"/>
        <end position="105"/>
    </location>
</feature>
<name>RL24_ACIBY</name>
<accession>B0V6V6</accession>
<organism>
    <name type="scientific">Acinetobacter baumannii (strain AYE)</name>
    <dbReference type="NCBI Taxonomy" id="509173"/>
    <lineage>
        <taxon>Bacteria</taxon>
        <taxon>Pseudomonadati</taxon>
        <taxon>Pseudomonadota</taxon>
        <taxon>Gammaproteobacteria</taxon>
        <taxon>Moraxellales</taxon>
        <taxon>Moraxellaceae</taxon>
        <taxon>Acinetobacter</taxon>
        <taxon>Acinetobacter calcoaceticus/baumannii complex</taxon>
    </lineage>
</organism>
<protein>
    <recommendedName>
        <fullName evidence="1">Large ribosomal subunit protein uL24</fullName>
    </recommendedName>
    <alternativeName>
        <fullName evidence="2">50S ribosomal protein L24</fullName>
    </alternativeName>
</protein>
<proteinExistence type="inferred from homology"/>
<reference key="1">
    <citation type="journal article" date="2008" name="PLoS ONE">
        <title>Comparative analysis of Acinetobacters: three genomes for three lifestyles.</title>
        <authorList>
            <person name="Vallenet D."/>
            <person name="Nordmann P."/>
            <person name="Barbe V."/>
            <person name="Poirel L."/>
            <person name="Mangenot S."/>
            <person name="Bataille E."/>
            <person name="Dossat C."/>
            <person name="Gas S."/>
            <person name="Kreimeyer A."/>
            <person name="Lenoble P."/>
            <person name="Oztas S."/>
            <person name="Poulain J."/>
            <person name="Segurens B."/>
            <person name="Robert C."/>
            <person name="Abergel C."/>
            <person name="Claverie J.-M."/>
            <person name="Raoult D."/>
            <person name="Medigue C."/>
            <person name="Weissenbach J."/>
            <person name="Cruveiller S."/>
        </authorList>
    </citation>
    <scope>NUCLEOTIDE SEQUENCE [LARGE SCALE GENOMIC DNA]</scope>
    <source>
        <strain>AYE</strain>
    </source>
</reference>
<comment type="function">
    <text evidence="1">One of two assembly initiator proteins, it binds directly to the 5'-end of the 23S rRNA, where it nucleates assembly of the 50S subunit.</text>
</comment>
<comment type="function">
    <text evidence="1">One of the proteins that surrounds the polypeptide exit tunnel on the outside of the subunit.</text>
</comment>
<comment type="subunit">
    <text evidence="1">Part of the 50S ribosomal subunit.</text>
</comment>
<comment type="similarity">
    <text evidence="1">Belongs to the universal ribosomal protein uL24 family.</text>
</comment>
<gene>
    <name evidence="1" type="primary">rplX</name>
    <name type="ordered locus">ABAYE0419</name>
</gene>
<keyword id="KW-0687">Ribonucleoprotein</keyword>
<keyword id="KW-0689">Ribosomal protein</keyword>
<keyword id="KW-0694">RNA-binding</keyword>
<keyword id="KW-0699">rRNA-binding</keyword>